<reference key="1">
    <citation type="journal article" date="1994" name="Nature">
        <title>Complete DNA sequence of yeast chromosome XI.</title>
        <authorList>
            <person name="Dujon B."/>
            <person name="Alexandraki D."/>
            <person name="Andre B."/>
            <person name="Ansorge W."/>
            <person name="Baladron V."/>
            <person name="Ballesta J.P.G."/>
            <person name="Banrevi A."/>
            <person name="Bolle P.-A."/>
            <person name="Bolotin-Fukuhara M."/>
            <person name="Bossier P."/>
            <person name="Bou G."/>
            <person name="Boyer J."/>
            <person name="Buitrago M.J."/>
            <person name="Cheret G."/>
            <person name="Colleaux L."/>
            <person name="Daignan-Fornier B."/>
            <person name="del Rey F."/>
            <person name="Dion C."/>
            <person name="Domdey H."/>
            <person name="Duesterhoeft A."/>
            <person name="Duesterhus S."/>
            <person name="Entian K.-D."/>
            <person name="Erfle H."/>
            <person name="Esteban P.F."/>
            <person name="Feldmann H."/>
            <person name="Fernandes L."/>
            <person name="Fobo G.M."/>
            <person name="Fritz C."/>
            <person name="Fukuhara H."/>
            <person name="Gabel C."/>
            <person name="Gaillon L."/>
            <person name="Garcia-Cantalejo J.M."/>
            <person name="Garcia-Ramirez J.J."/>
            <person name="Gent M.E."/>
            <person name="Ghazvini M."/>
            <person name="Goffeau A."/>
            <person name="Gonzalez A."/>
            <person name="Grothues D."/>
            <person name="Guerreiro P."/>
            <person name="Hegemann J.H."/>
            <person name="Hewitt N."/>
            <person name="Hilger F."/>
            <person name="Hollenberg C.P."/>
            <person name="Horaitis O."/>
            <person name="Indge K.J."/>
            <person name="Jacquier A."/>
            <person name="James C.M."/>
            <person name="Jauniaux J.-C."/>
            <person name="Jimenez A."/>
            <person name="Keuchel H."/>
            <person name="Kirchrath L."/>
            <person name="Kleine K."/>
            <person name="Koetter P."/>
            <person name="Legrain P."/>
            <person name="Liebl S."/>
            <person name="Louis E.J."/>
            <person name="Maia e Silva A."/>
            <person name="Marck C."/>
            <person name="Monnier A.-L."/>
            <person name="Moestl D."/>
            <person name="Mueller S."/>
            <person name="Obermaier B."/>
            <person name="Oliver S.G."/>
            <person name="Pallier C."/>
            <person name="Pascolo S."/>
            <person name="Pfeiffer F."/>
            <person name="Philippsen P."/>
            <person name="Planta R.J."/>
            <person name="Pohl F.M."/>
            <person name="Pohl T.M."/>
            <person name="Poehlmann R."/>
            <person name="Portetelle D."/>
            <person name="Purnelle B."/>
            <person name="Puzos V."/>
            <person name="Ramezani Rad M."/>
            <person name="Rasmussen S.W."/>
            <person name="Remacha M.A."/>
            <person name="Revuelta J.L."/>
            <person name="Richard G.-F."/>
            <person name="Rieger M."/>
            <person name="Rodrigues-Pousada C."/>
            <person name="Rose M."/>
            <person name="Rupp T."/>
            <person name="Santos M.A."/>
            <person name="Schwager C."/>
            <person name="Sensen C."/>
            <person name="Skala J."/>
            <person name="Soares H."/>
            <person name="Sor F."/>
            <person name="Stegemann J."/>
            <person name="Tettelin H."/>
            <person name="Thierry A."/>
            <person name="Tzermia M."/>
            <person name="Urrestarazu L.A."/>
            <person name="van Dyck L."/>
            <person name="van Vliet-Reedijk J.C."/>
            <person name="Valens M."/>
            <person name="Vandenbol M."/>
            <person name="Vilela C."/>
            <person name="Vissers S."/>
            <person name="von Wettstein D."/>
            <person name="Voss H."/>
            <person name="Wiemann S."/>
            <person name="Xu G."/>
            <person name="Zimmermann J."/>
            <person name="Haasemann M."/>
            <person name="Becker I."/>
            <person name="Mewes H.-W."/>
        </authorList>
    </citation>
    <scope>NUCLEOTIDE SEQUENCE [LARGE SCALE GENOMIC DNA]</scope>
    <source>
        <strain>ATCC 204508 / S288c</strain>
    </source>
</reference>
<reference key="2">
    <citation type="journal article" date="2014" name="G3 (Bethesda)">
        <title>The reference genome sequence of Saccharomyces cerevisiae: Then and now.</title>
        <authorList>
            <person name="Engel S.R."/>
            <person name="Dietrich F.S."/>
            <person name="Fisk D.G."/>
            <person name="Binkley G."/>
            <person name="Balakrishnan R."/>
            <person name="Costanzo M.C."/>
            <person name="Dwight S.S."/>
            <person name="Hitz B.C."/>
            <person name="Karra K."/>
            <person name="Nash R.S."/>
            <person name="Weng S."/>
            <person name="Wong E.D."/>
            <person name="Lloyd P."/>
            <person name="Skrzypek M.S."/>
            <person name="Miyasato S.R."/>
            <person name="Simison M."/>
            <person name="Cherry J.M."/>
        </authorList>
    </citation>
    <scope>GENOME REANNOTATION</scope>
    <source>
        <strain>ATCC 204508 / S288c</strain>
    </source>
</reference>
<reference key="3">
    <citation type="journal article" date="2003" name="Mol. Cell">
        <title>Assigning function to yeast proteins by integration of technologies.</title>
        <authorList>
            <person name="Hazbun T.R."/>
            <person name="Malmstroem L."/>
            <person name="Anderson S."/>
            <person name="Graczyk B.J."/>
            <person name="Fox B."/>
            <person name="Riffle M."/>
            <person name="Sundin B.A."/>
            <person name="Aranda J.D."/>
            <person name="McDonald W.H."/>
            <person name="Chiu C.-H."/>
            <person name="Snydsman B.E."/>
            <person name="Bradley P."/>
            <person name="Muller E.G.D."/>
            <person name="Fields S."/>
            <person name="Baker D."/>
            <person name="Yates J.R. III"/>
            <person name="Davis T.N."/>
        </authorList>
    </citation>
    <scope>IDENTIFICATION BY MASS SPECTROMETRY</scope>
</reference>
<reference key="4">
    <citation type="journal article" date="2003" name="Nature">
        <title>Global analysis of protein localization in budding yeast.</title>
        <authorList>
            <person name="Huh W.-K."/>
            <person name="Falvo J.V."/>
            <person name="Gerke L.C."/>
            <person name="Carroll A.S."/>
            <person name="Howson R.W."/>
            <person name="Weissman J.S."/>
            <person name="O'Shea E.K."/>
        </authorList>
    </citation>
    <scope>SUBCELLULAR LOCATION [LARGE SCALE ANALYSIS]</scope>
</reference>
<reference key="5">
    <citation type="journal article" date="2003" name="Nature">
        <title>Global analysis of protein expression in yeast.</title>
        <authorList>
            <person name="Ghaemmaghami S."/>
            <person name="Huh W.-K."/>
            <person name="Bower K."/>
            <person name="Howson R.W."/>
            <person name="Belle A."/>
            <person name="Dephoure N."/>
            <person name="O'Shea E.K."/>
            <person name="Weissman J.S."/>
        </authorList>
    </citation>
    <scope>LEVEL OF PROTEIN EXPRESSION [LARGE SCALE ANALYSIS]</scope>
</reference>
<reference key="6">
    <citation type="journal article" date="2003" name="Nucleic Acids Res.">
        <title>A candidate prostate cancer susceptibility gene encodes tRNA 3' processing endoribonuclease.</title>
        <authorList>
            <person name="Takaku H."/>
            <person name="Minagawa A."/>
            <person name="Takagi M."/>
            <person name="Nashimoto M."/>
        </authorList>
    </citation>
    <scope>ENZYME ACTIVITY</scope>
</reference>
<reference key="7">
    <citation type="journal article" date="2007" name="J. Proteome Res.">
        <title>Large-scale phosphorylation analysis of alpha-factor-arrested Saccharomyces cerevisiae.</title>
        <authorList>
            <person name="Li X."/>
            <person name="Gerber S.A."/>
            <person name="Rudner A.D."/>
            <person name="Beausoleil S.A."/>
            <person name="Haas W."/>
            <person name="Villen J."/>
            <person name="Elias J.E."/>
            <person name="Gygi S.P."/>
        </authorList>
    </citation>
    <scope>PHOSPHORYLATION [LARGE SCALE ANALYSIS] AT SER-824</scope>
    <scope>IDENTIFICATION BY MASS SPECTROMETRY [LARGE SCALE ANALYSIS]</scope>
    <source>
        <strain>ADR376</strain>
    </source>
</reference>
<reference key="8">
    <citation type="journal article" date="2008" name="Mol. Cell. Proteomics">
        <title>A multidimensional chromatography technology for in-depth phosphoproteome analysis.</title>
        <authorList>
            <person name="Albuquerque C.P."/>
            <person name="Smolka M.B."/>
            <person name="Payne S.H."/>
            <person name="Bafna V."/>
            <person name="Eng J."/>
            <person name="Zhou H."/>
        </authorList>
    </citation>
    <scope>PHOSPHORYLATION [LARGE SCALE ANALYSIS] AT SER-824</scope>
    <scope>IDENTIFICATION BY MASS SPECTROMETRY [LARGE SCALE ANALYSIS]</scope>
</reference>
<accession>P36159</accession>
<accession>D6VXD9</accession>
<gene>
    <name type="primary">TRZ1</name>
    <name type="ordered locus">YKR079C</name>
</gene>
<evidence type="ECO:0000250" key="1"/>
<evidence type="ECO:0000269" key="2">
    <source>
    </source>
</evidence>
<evidence type="ECO:0000269" key="3">
    <source>
    </source>
</evidence>
<evidence type="ECO:0000269" key="4">
    <source>
    </source>
</evidence>
<evidence type="ECO:0000305" key="5"/>
<evidence type="ECO:0007744" key="6">
    <source>
    </source>
</evidence>
<evidence type="ECO:0007744" key="7">
    <source>
    </source>
</evidence>
<evidence type="ECO:0007829" key="8">
    <source>
        <dbReference type="PDB" id="5MTZ"/>
    </source>
</evidence>
<organism>
    <name type="scientific">Saccharomyces cerevisiae (strain ATCC 204508 / S288c)</name>
    <name type="common">Baker's yeast</name>
    <dbReference type="NCBI Taxonomy" id="559292"/>
    <lineage>
        <taxon>Eukaryota</taxon>
        <taxon>Fungi</taxon>
        <taxon>Dikarya</taxon>
        <taxon>Ascomycota</taxon>
        <taxon>Saccharomycotina</taxon>
        <taxon>Saccharomycetes</taxon>
        <taxon>Saccharomycetales</taxon>
        <taxon>Saccharomycetaceae</taxon>
        <taxon>Saccharomyces</taxon>
    </lineage>
</organism>
<protein>
    <recommendedName>
        <fullName>Ribonuclease Z</fullName>
        <shortName>RNase Z</shortName>
        <ecNumber>3.1.26.11</ecNumber>
    </recommendedName>
    <alternativeName>
        <fullName>tRNA 3 endonuclease</fullName>
    </alternativeName>
    <alternativeName>
        <fullName>tRNase Z</fullName>
    </alternativeName>
</protein>
<comment type="function">
    <text>Zinc phosphodiesterase, which displays some tRNA 3'-processing endonuclease activity. Probably involved in tRNA maturation, by removing a 3'-trailer from precursor tRNA.</text>
</comment>
<comment type="catalytic activity">
    <reaction evidence="2">
        <text>Endonucleolytic cleavage of RNA, removing extra 3' nucleotides from tRNA precursor, generating 3' termini of tRNAs. A 3'-hydroxy group is left at the tRNA terminus and a 5'-phosphoryl group is left at the trailer molecule.</text>
        <dbReference type="EC" id="3.1.26.11"/>
    </reaction>
</comment>
<comment type="cofactor">
    <cofactor evidence="5">
        <name>Zn(2+)</name>
        <dbReference type="ChEBI" id="CHEBI:29105"/>
    </cofactor>
</comment>
<comment type="subunit">
    <text evidence="1">Homodimer.</text>
</comment>
<comment type="subcellular location">
    <subcellularLocation>
        <location evidence="3">Cytoplasm</location>
    </subcellularLocation>
    <subcellularLocation>
        <location evidence="3">Nucleus</location>
    </subcellularLocation>
</comment>
<comment type="miscellaneous">
    <text evidence="4">Present with 2710 molecules/cell in log phase SD medium.</text>
</comment>
<comment type="similarity">
    <text evidence="5">Belongs to the RNase Z family.</text>
</comment>
<proteinExistence type="evidence at protein level"/>
<sequence>MFTFIPITHPTSDTKHPLLLVQSAHGEKYFFGKIGEGSQRSLTENKIRISKLKDIFLTGELNWSDIGGLPGMILTIADQGKSNLVLHYGNDILNYIVSTWRYFVFRFGIDLNDHIMKDKEVYKDKIIAVKSFNVLKNGGEDRLGVFDSFQKGVLRSIVAKMFPKHAPTDRYDPSSDPHLNVELPDLDAKVEVSTNYEISFSPVRGKFKVEEAIKLGVPKGPLFAKLTKGQTITLDNGIVVTPEQVLENERHFAKVLILDIPDDLYLNAFVEKFKDYDCAELGMVYYFLGDEVTINDNLFAFIDIFEKNNYGKVNHMISHNKISPNTISFFGSALTTLKLKALQVNNYNLPKTDRVFSKDFYDRFDTPLSRGTSMCKSQEEPLNTIIEKDNIHIFSQNKTVTFEPFRMNEEPMKCNINGEVADFSWQEIFEEHVKPLEFPLADVDTVINNQLHVDNFNNSAEKKKHVEIITLGTGSALPSKYRNVVSTLVKVPFTDADGNTINRNIMLDAGENTLGTIHRMFSQLAVKSIFQDLKMIYLSHLHADHHLGIISVLNEWYKYNKDDETSYIYVVTPWQYHKFVNEWLVLENKEILKRIKYISCEHFINDSFVRMQTQSVPLAEFNEILKENSNQESNRKLELDRDSSYRDVDLIRQMYEDLSIEYFQTCRAIHCDWAYSNSITFRMDENNEHNTFKVSYSGDTRPNIEKFSLEIGYNSDLLIHEATLENQLLEDAVKKKHCTINEAIGVSNKMNARKLILTHFSQRYPKLPQLDNNIDVMAREFCFAFDSMIVDYEKIGEQQRIFPLLNKAFVEEKEEEEDVDDVESVQDLEVKLKKHKKN</sequence>
<keyword id="KW-0002">3D-structure</keyword>
<keyword id="KW-0963">Cytoplasm</keyword>
<keyword id="KW-0255">Endonuclease</keyword>
<keyword id="KW-0378">Hydrolase</keyword>
<keyword id="KW-0479">Metal-binding</keyword>
<keyword id="KW-0540">Nuclease</keyword>
<keyword id="KW-0539">Nucleus</keyword>
<keyword id="KW-0597">Phosphoprotein</keyword>
<keyword id="KW-1185">Reference proteome</keyword>
<keyword id="KW-0819">tRNA processing</keyword>
<keyword id="KW-0862">Zinc</keyword>
<name>RNZ_YEAST</name>
<dbReference type="EC" id="3.1.26.11"/>
<dbReference type="EMBL" id="Z28304">
    <property type="protein sequence ID" value="CAA82158.1"/>
    <property type="molecule type" value="Genomic_DNA"/>
</dbReference>
<dbReference type="EMBL" id="BK006944">
    <property type="protein sequence ID" value="DAA09229.1"/>
    <property type="molecule type" value="Genomic_DNA"/>
</dbReference>
<dbReference type="PIR" id="S38156">
    <property type="entry name" value="S38156"/>
</dbReference>
<dbReference type="RefSeq" id="NP_013005.1">
    <property type="nucleotide sequence ID" value="NM_001179869.1"/>
</dbReference>
<dbReference type="PDB" id="5MTZ">
    <property type="method" value="X-ray"/>
    <property type="resolution" value="2.99 A"/>
    <property type="chains" value="A/B=2-838"/>
</dbReference>
<dbReference type="PDBsum" id="5MTZ"/>
<dbReference type="SMR" id="P36159"/>
<dbReference type="BioGRID" id="34210">
    <property type="interactions" value="31"/>
</dbReference>
<dbReference type="DIP" id="DIP-5339N"/>
<dbReference type="FunCoup" id="P36159">
    <property type="interactions" value="1383"/>
</dbReference>
<dbReference type="IntAct" id="P36159">
    <property type="interactions" value="6"/>
</dbReference>
<dbReference type="MINT" id="P36159"/>
<dbReference type="STRING" id="4932.YKR079C"/>
<dbReference type="iPTMnet" id="P36159"/>
<dbReference type="PaxDb" id="4932-YKR079C"/>
<dbReference type="PeptideAtlas" id="P36159"/>
<dbReference type="EnsemblFungi" id="YKR079C_mRNA">
    <property type="protein sequence ID" value="YKR079C"/>
    <property type="gene ID" value="YKR079C"/>
</dbReference>
<dbReference type="GeneID" id="853954"/>
<dbReference type="KEGG" id="sce:YKR079C"/>
<dbReference type="AGR" id="SGD:S000001787"/>
<dbReference type="SGD" id="S000001787">
    <property type="gene designation" value="TRZ1"/>
</dbReference>
<dbReference type="VEuPathDB" id="FungiDB:YKR079C"/>
<dbReference type="eggNOG" id="KOG2121">
    <property type="taxonomic scope" value="Eukaryota"/>
</dbReference>
<dbReference type="GeneTree" id="ENSGT00730000111191"/>
<dbReference type="HOGENOM" id="CLU_006220_0_0_1"/>
<dbReference type="InParanoid" id="P36159"/>
<dbReference type="OMA" id="MSHCKHT"/>
<dbReference type="OrthoDB" id="527344at2759"/>
<dbReference type="BioCyc" id="YEAST:G3O-32043-MONOMER"/>
<dbReference type="BRENDA" id="3.1.26.11">
    <property type="organism ID" value="984"/>
</dbReference>
<dbReference type="BioGRID-ORCS" id="853954">
    <property type="hits" value="5 hits in 10 CRISPR screens"/>
</dbReference>
<dbReference type="PRO" id="PR:P36159"/>
<dbReference type="Proteomes" id="UP000002311">
    <property type="component" value="Chromosome XI"/>
</dbReference>
<dbReference type="RNAct" id="P36159">
    <property type="molecule type" value="protein"/>
</dbReference>
<dbReference type="GO" id="GO:0005737">
    <property type="term" value="C:cytoplasm"/>
    <property type="evidence" value="ECO:0007005"/>
    <property type="project" value="SGD"/>
</dbReference>
<dbReference type="GO" id="GO:0005739">
    <property type="term" value="C:mitochondrion"/>
    <property type="evidence" value="ECO:0000314"/>
    <property type="project" value="SGD"/>
</dbReference>
<dbReference type="GO" id="GO:0005634">
    <property type="term" value="C:nucleus"/>
    <property type="evidence" value="ECO:0000314"/>
    <property type="project" value="SGD"/>
</dbReference>
<dbReference type="GO" id="GO:0042781">
    <property type="term" value="F:3'-tRNA processing endoribonuclease activity"/>
    <property type="evidence" value="ECO:0000314"/>
    <property type="project" value="SGD"/>
</dbReference>
<dbReference type="GO" id="GO:0046872">
    <property type="term" value="F:metal ion binding"/>
    <property type="evidence" value="ECO:0007669"/>
    <property type="project" value="UniProtKB-KW"/>
</dbReference>
<dbReference type="GO" id="GO:1990180">
    <property type="term" value="P:mitochondrial tRNA 3'-end processing"/>
    <property type="evidence" value="ECO:0000314"/>
    <property type="project" value="SGD"/>
</dbReference>
<dbReference type="GO" id="GO:0042780">
    <property type="term" value="P:tRNA 3'-end processing"/>
    <property type="evidence" value="ECO:0000314"/>
    <property type="project" value="SGD"/>
</dbReference>
<dbReference type="CDD" id="cd07718">
    <property type="entry name" value="RNaseZ_ELAC1_ELAC2-C-term-like_MBL-fold"/>
    <property type="match status" value="1"/>
</dbReference>
<dbReference type="FunFam" id="3.60.15.10:FF:000065">
    <property type="entry name" value="Ribonuclease Z"/>
    <property type="match status" value="1"/>
</dbReference>
<dbReference type="Gene3D" id="3.60.15.10">
    <property type="entry name" value="Ribonuclease Z/Hydroxyacylglutathione hydrolase-like"/>
    <property type="match status" value="2"/>
</dbReference>
<dbReference type="InterPro" id="IPR036866">
    <property type="entry name" value="RibonucZ/Hydroxyglut_hydro"/>
</dbReference>
<dbReference type="InterPro" id="IPR047151">
    <property type="entry name" value="RNZ2-like"/>
</dbReference>
<dbReference type="InterPro" id="IPR027794">
    <property type="entry name" value="tRNase_Z_dom"/>
</dbReference>
<dbReference type="PANTHER" id="PTHR12553">
    <property type="entry name" value="ZINC PHOSPHODIESTERASE ELAC PROTEIN 2"/>
    <property type="match status" value="1"/>
</dbReference>
<dbReference type="PANTHER" id="PTHR12553:SF49">
    <property type="entry name" value="ZINC PHOSPHODIESTERASE ELAC PROTEIN 2"/>
    <property type="match status" value="1"/>
</dbReference>
<dbReference type="Pfam" id="PF13691">
    <property type="entry name" value="Lactamase_B_4"/>
    <property type="match status" value="1"/>
</dbReference>
<dbReference type="SUPFAM" id="SSF56281">
    <property type="entry name" value="Metallo-hydrolase/oxidoreductase"/>
    <property type="match status" value="2"/>
</dbReference>
<feature type="chain" id="PRO_0000155837" description="Ribonuclease Z">
    <location>
        <begin position="1"/>
        <end position="838"/>
    </location>
</feature>
<feature type="modified residue" description="Phosphoserine" evidence="6 7">
    <location>
        <position position="824"/>
    </location>
</feature>
<feature type="strand" evidence="8">
    <location>
        <begin position="2"/>
        <end position="8"/>
    </location>
</feature>
<feature type="strand" evidence="8">
    <location>
        <begin position="18"/>
        <end position="23"/>
    </location>
</feature>
<feature type="strand" evidence="8">
    <location>
        <begin position="28"/>
        <end position="32"/>
    </location>
</feature>
<feature type="turn" evidence="8">
    <location>
        <begin position="36"/>
        <end position="39"/>
    </location>
</feature>
<feature type="helix" evidence="8">
    <location>
        <begin position="40"/>
        <end position="44"/>
    </location>
</feature>
<feature type="strand" evidence="8">
    <location>
        <begin position="54"/>
        <end position="57"/>
    </location>
</feature>
<feature type="helix" evidence="8">
    <location>
        <begin position="63"/>
        <end position="66"/>
    </location>
</feature>
<feature type="helix" evidence="8">
    <location>
        <begin position="68"/>
        <end position="78"/>
    </location>
</feature>
<feature type="strand" evidence="8">
    <location>
        <begin position="82"/>
        <end position="90"/>
    </location>
</feature>
<feature type="helix" evidence="8">
    <location>
        <begin position="92"/>
        <end position="99"/>
    </location>
</feature>
<feature type="turn" evidence="8">
    <location>
        <begin position="100"/>
        <end position="103"/>
    </location>
</feature>
<feature type="strand" evidence="8">
    <location>
        <begin position="110"/>
        <end position="115"/>
    </location>
</feature>
<feature type="strand" evidence="8">
    <location>
        <begin position="121"/>
        <end position="123"/>
    </location>
</feature>
<feature type="strand" evidence="8">
    <location>
        <begin position="125"/>
        <end position="137"/>
    </location>
</feature>
<feature type="helix" evidence="8">
    <location>
        <begin position="148"/>
        <end position="161"/>
    </location>
</feature>
<feature type="helix" evidence="8">
    <location>
        <begin position="173"/>
        <end position="175"/>
    </location>
</feature>
<feature type="strand" evidence="8">
    <location>
        <begin position="192"/>
        <end position="200"/>
    </location>
</feature>
<feature type="strand" evidence="8">
    <location>
        <begin position="254"/>
        <end position="260"/>
    </location>
</feature>
<feature type="helix" evidence="8">
    <location>
        <begin position="263"/>
        <end position="265"/>
    </location>
</feature>
<feature type="helix" evidence="8">
    <location>
        <begin position="266"/>
        <end position="273"/>
    </location>
</feature>
<feature type="strand" evidence="8">
    <location>
        <begin position="281"/>
        <end position="288"/>
    </location>
</feature>
<feature type="helix" evidence="8">
    <location>
        <begin position="296"/>
        <end position="302"/>
    </location>
</feature>
<feature type="helix" evidence="8">
    <location>
        <begin position="303"/>
        <end position="305"/>
    </location>
</feature>
<feature type="strand" evidence="8">
    <location>
        <begin position="306"/>
        <end position="308"/>
    </location>
</feature>
<feature type="strand" evidence="8">
    <location>
        <begin position="314"/>
        <end position="318"/>
    </location>
</feature>
<feature type="turn" evidence="8">
    <location>
        <begin position="320"/>
        <end position="322"/>
    </location>
</feature>
<feature type="helix" evidence="8">
    <location>
        <begin position="330"/>
        <end position="342"/>
    </location>
</feature>
<feature type="helix" evidence="8">
    <location>
        <begin position="358"/>
        <end position="363"/>
    </location>
</feature>
<feature type="strand" evidence="8">
    <location>
        <begin position="364"/>
        <end position="366"/>
    </location>
</feature>
<feature type="strand" evidence="8">
    <location>
        <begin position="370"/>
        <end position="372"/>
    </location>
</feature>
<feature type="helix" evidence="8">
    <location>
        <begin position="388"/>
        <end position="390"/>
    </location>
</feature>
<feature type="strand" evidence="8">
    <location>
        <begin position="391"/>
        <end position="393"/>
    </location>
</feature>
<feature type="strand" evidence="8">
    <location>
        <begin position="400"/>
        <end position="402"/>
    </location>
</feature>
<feature type="turn" evidence="8">
    <location>
        <begin position="407"/>
        <end position="409"/>
    </location>
</feature>
<feature type="strand" evidence="8">
    <location>
        <begin position="414"/>
        <end position="416"/>
    </location>
</feature>
<feature type="helix" evidence="8">
    <location>
        <begin position="425"/>
        <end position="432"/>
    </location>
</feature>
<feature type="helix" evidence="8">
    <location>
        <begin position="434"/>
        <end position="436"/>
    </location>
</feature>
<feature type="helix" evidence="8">
    <location>
        <begin position="443"/>
        <end position="447"/>
    </location>
</feature>
<feature type="helix" evidence="8">
    <location>
        <begin position="448"/>
        <end position="450"/>
    </location>
</feature>
<feature type="helix" evidence="8">
    <location>
        <begin position="460"/>
        <end position="464"/>
    </location>
</feature>
<feature type="strand" evidence="8">
    <location>
        <begin position="467"/>
        <end position="472"/>
    </location>
</feature>
<feature type="strand" evidence="8">
    <location>
        <begin position="486"/>
        <end position="494"/>
    </location>
</feature>
<feature type="strand" evidence="8">
    <location>
        <begin position="496"/>
        <end position="498"/>
    </location>
</feature>
<feature type="strand" evidence="8">
    <location>
        <begin position="500"/>
        <end position="509"/>
    </location>
</feature>
<feature type="helix" evidence="8">
    <location>
        <begin position="513"/>
        <end position="520"/>
    </location>
</feature>
<feature type="helix" evidence="8">
    <location>
        <begin position="523"/>
        <end position="531"/>
    </location>
</feature>
<feature type="strand" evidence="8">
    <location>
        <begin position="533"/>
        <end position="537"/>
    </location>
</feature>
<feature type="helix" evidence="8">
    <location>
        <begin position="543"/>
        <end position="546"/>
    </location>
</feature>
<feature type="helix" evidence="8">
    <location>
        <begin position="549"/>
        <end position="560"/>
    </location>
</feature>
<feature type="strand" evidence="8">
    <location>
        <begin position="568"/>
        <end position="571"/>
    </location>
</feature>
<feature type="helix" evidence="8">
    <location>
        <begin position="574"/>
        <end position="587"/>
    </location>
</feature>
<feature type="helix" evidence="8">
    <location>
        <begin position="589"/>
        <end position="593"/>
    </location>
</feature>
<feature type="strand" evidence="8">
    <location>
        <begin position="595"/>
        <end position="597"/>
    </location>
</feature>
<feature type="helix" evidence="8">
    <location>
        <begin position="601"/>
        <end position="603"/>
    </location>
</feature>
<feature type="strand" evidence="8">
    <location>
        <begin position="604"/>
        <end position="607"/>
    </location>
</feature>
<feature type="helix" evidence="8">
    <location>
        <begin position="619"/>
        <end position="621"/>
    </location>
</feature>
<feature type="helix" evidence="8">
    <location>
        <begin position="641"/>
        <end position="644"/>
    </location>
</feature>
<feature type="helix" evidence="8">
    <location>
        <begin position="648"/>
        <end position="658"/>
    </location>
</feature>
<feature type="strand" evidence="8">
    <location>
        <begin position="660"/>
        <end position="667"/>
    </location>
</feature>
<feature type="strand" evidence="8">
    <location>
        <begin position="669"/>
        <end position="671"/>
    </location>
</feature>
<feature type="strand" evidence="8">
    <location>
        <begin position="675"/>
        <end position="682"/>
    </location>
</feature>
<feature type="strand" evidence="8">
    <location>
        <begin position="691"/>
        <end position="696"/>
    </location>
</feature>
<feature type="helix" evidence="8">
    <location>
        <begin position="704"/>
        <end position="711"/>
    </location>
</feature>
<feature type="turn" evidence="8">
    <location>
        <begin position="712"/>
        <end position="714"/>
    </location>
</feature>
<feature type="strand" evidence="8">
    <location>
        <begin position="716"/>
        <end position="721"/>
    </location>
</feature>
<feature type="helix" evidence="8">
    <location>
        <begin position="726"/>
        <end position="728"/>
    </location>
</feature>
<feature type="helix" evidence="8">
    <location>
        <begin position="729"/>
        <end position="735"/>
    </location>
</feature>
<feature type="helix" evidence="8">
    <location>
        <begin position="740"/>
        <end position="750"/>
    </location>
</feature>
<feature type="strand" evidence="8">
    <location>
        <begin position="753"/>
        <end position="758"/>
    </location>
</feature>
<feature type="strand" evidence="8">
    <location>
        <begin position="778"/>
        <end position="783"/>
    </location>
</feature>
<feature type="strand" evidence="8">
    <location>
        <begin position="788"/>
        <end position="791"/>
    </location>
</feature>
<feature type="helix" evidence="8">
    <location>
        <begin position="792"/>
        <end position="794"/>
    </location>
</feature>
<feature type="helix" evidence="8">
    <location>
        <begin position="796"/>
        <end position="801"/>
    </location>
</feature>
<feature type="helix" evidence="8">
    <location>
        <begin position="802"/>
        <end position="807"/>
    </location>
</feature>
<feature type="helix" evidence="8">
    <location>
        <begin position="810"/>
        <end position="816"/>
    </location>
</feature>